<sequence length="187" mass="20686">MNLQHHFLIAMPALQDPIFRRSVVYICEHNTNGAMGIIVNKPLENLKIEGILEKLKITPEPRDESIRLDKPVMLGGPLAEDRGFILHTPPSNFASSIRISDNTVMTTSRDVLETLGTDKQPSDVLVALGYASWEKGQLEQEILDNAWLTAPADLNILFKTPIADRWREAAKLIGVDILTMPGVAGHA</sequence>
<organism>
    <name type="scientific">Escherichia coli O6:K15:H31 (strain 536 / UPEC)</name>
    <dbReference type="NCBI Taxonomy" id="362663"/>
    <lineage>
        <taxon>Bacteria</taxon>
        <taxon>Pseudomonadati</taxon>
        <taxon>Pseudomonadota</taxon>
        <taxon>Gammaproteobacteria</taxon>
        <taxon>Enterobacterales</taxon>
        <taxon>Enterobacteriaceae</taxon>
        <taxon>Escherichia</taxon>
    </lineage>
</organism>
<gene>
    <name evidence="1" type="primary">yqgE</name>
    <name type="ordered locus">ECP_2942</name>
</gene>
<feature type="chain" id="PRO_0000258825" description="UPF0301 protein YqgE">
    <location>
        <begin position="1"/>
        <end position="187"/>
    </location>
</feature>
<accession>Q0TDQ3</accession>
<evidence type="ECO:0000255" key="1">
    <source>
        <dbReference type="HAMAP-Rule" id="MF_00758"/>
    </source>
</evidence>
<proteinExistence type="inferred from homology"/>
<protein>
    <recommendedName>
        <fullName evidence="1">UPF0301 protein YqgE</fullName>
    </recommendedName>
</protein>
<name>YQGE_ECOL5</name>
<comment type="similarity">
    <text evidence="1">Belongs to the UPF0301 (AlgH) family.</text>
</comment>
<reference key="1">
    <citation type="journal article" date="2006" name="Mol. Microbiol.">
        <title>Role of pathogenicity island-associated integrases in the genome plasticity of uropathogenic Escherichia coli strain 536.</title>
        <authorList>
            <person name="Hochhut B."/>
            <person name="Wilde C."/>
            <person name="Balling G."/>
            <person name="Middendorf B."/>
            <person name="Dobrindt U."/>
            <person name="Brzuszkiewicz E."/>
            <person name="Gottschalk G."/>
            <person name="Carniel E."/>
            <person name="Hacker J."/>
        </authorList>
    </citation>
    <scope>NUCLEOTIDE SEQUENCE [LARGE SCALE GENOMIC DNA]</scope>
    <source>
        <strain>536 / UPEC</strain>
    </source>
</reference>
<dbReference type="EMBL" id="CP000247">
    <property type="protein sequence ID" value="ABG70926.1"/>
    <property type="molecule type" value="Genomic_DNA"/>
</dbReference>
<dbReference type="RefSeq" id="WP_001053178.1">
    <property type="nucleotide sequence ID" value="NC_008253.1"/>
</dbReference>
<dbReference type="SMR" id="Q0TDQ3"/>
<dbReference type="KEGG" id="ecp:ECP_2942"/>
<dbReference type="HOGENOM" id="CLU_057596_1_0_6"/>
<dbReference type="Proteomes" id="UP000009182">
    <property type="component" value="Chromosome"/>
</dbReference>
<dbReference type="GO" id="GO:0005829">
    <property type="term" value="C:cytosol"/>
    <property type="evidence" value="ECO:0007669"/>
    <property type="project" value="TreeGrafter"/>
</dbReference>
<dbReference type="FunFam" id="3.30.70.1300:FF:000001">
    <property type="entry name" value="UPF0301 protein YqgE"/>
    <property type="match status" value="1"/>
</dbReference>
<dbReference type="Gene3D" id="3.40.1740.10">
    <property type="entry name" value="VC0467-like"/>
    <property type="match status" value="1"/>
</dbReference>
<dbReference type="Gene3D" id="3.30.70.1300">
    <property type="entry name" value="VC0467-like domains"/>
    <property type="match status" value="1"/>
</dbReference>
<dbReference type="HAMAP" id="MF_00758">
    <property type="entry name" value="UPF0301"/>
    <property type="match status" value="1"/>
</dbReference>
<dbReference type="InterPro" id="IPR003774">
    <property type="entry name" value="AlgH-like"/>
</dbReference>
<dbReference type="NCBIfam" id="NF001266">
    <property type="entry name" value="PRK00228.1-1"/>
    <property type="match status" value="1"/>
</dbReference>
<dbReference type="PANTHER" id="PTHR30327">
    <property type="entry name" value="UNCHARACTERIZED PROTEIN YQGE"/>
    <property type="match status" value="1"/>
</dbReference>
<dbReference type="PANTHER" id="PTHR30327:SF1">
    <property type="entry name" value="UPF0301 PROTEIN YQGE"/>
    <property type="match status" value="1"/>
</dbReference>
<dbReference type="Pfam" id="PF02622">
    <property type="entry name" value="DUF179"/>
    <property type="match status" value="1"/>
</dbReference>
<dbReference type="SUPFAM" id="SSF143456">
    <property type="entry name" value="VC0467-like"/>
    <property type="match status" value="1"/>
</dbReference>